<evidence type="ECO:0000250" key="1"/>
<evidence type="ECO:0000250" key="2">
    <source>
        <dbReference type="UniProtKB" id="P05713"/>
    </source>
</evidence>
<evidence type="ECO:0000250" key="3">
    <source>
        <dbReference type="UniProtKB" id="Q13637"/>
    </source>
</evidence>
<evidence type="ECO:0000269" key="4">
    <source>
    </source>
</evidence>
<evidence type="ECO:0000269" key="5">
    <source>
    </source>
</evidence>
<evidence type="ECO:0000269" key="6">
    <source>
    </source>
</evidence>
<evidence type="ECO:0000269" key="7">
    <source>
    </source>
</evidence>
<evidence type="ECO:0000305" key="8"/>
<evidence type="ECO:0000312" key="9">
    <source>
        <dbReference type="EMBL" id="AAH16409.1"/>
    </source>
</evidence>
<evidence type="ECO:0000312" key="10">
    <source>
        <dbReference type="EMBL" id="AAH55945.1"/>
    </source>
</evidence>
<evidence type="ECO:0000312" key="11">
    <source>
        <dbReference type="EMBL" id="BAB28421.1"/>
    </source>
</evidence>
<evidence type="ECO:0000312" key="12">
    <source>
        <dbReference type="MGI" id="MGI:1915094"/>
    </source>
</evidence>
<sequence>MAGEGLGQQGASATAAPETREHLFKVLVIGELGVGKTSIIKRYVHQLFSQHYRATIGVDFALKVLNWDSRTLVRLQLWDIAGQERFGNMTRVYYKEALGAFVVFDISRSSTFDAVLKWKNDLDSKVHLPNGSPIPAVLLANKCDQKKDNSQSPSQMDQFCKDHGFTGWFETSAKDNINIDEATRFLVENMLANQQSFPSEEIDLDRIKLVEEPPTTKPRSQCC</sequence>
<organism evidence="11">
    <name type="scientific">Mus musculus</name>
    <name type="common">Mouse</name>
    <dbReference type="NCBI Taxonomy" id="10090"/>
    <lineage>
        <taxon>Eukaryota</taxon>
        <taxon>Metazoa</taxon>
        <taxon>Chordata</taxon>
        <taxon>Craniata</taxon>
        <taxon>Vertebrata</taxon>
        <taxon>Euteleostomi</taxon>
        <taxon>Mammalia</taxon>
        <taxon>Eutheria</taxon>
        <taxon>Euarchontoglires</taxon>
        <taxon>Glires</taxon>
        <taxon>Rodentia</taxon>
        <taxon>Myomorpha</taxon>
        <taxon>Muroidea</taxon>
        <taxon>Muridae</taxon>
        <taxon>Murinae</taxon>
        <taxon>Mus</taxon>
        <taxon>Mus</taxon>
    </lineage>
</organism>
<gene>
    <name evidence="12" type="primary">Rab32</name>
</gene>
<keyword id="KW-0007">Acetylation</keyword>
<keyword id="KW-0968">Cytoplasmic vesicle</keyword>
<keyword id="KW-0342">GTP-binding</keyword>
<keyword id="KW-0378">Hydrolase</keyword>
<keyword id="KW-0449">Lipoprotein</keyword>
<keyword id="KW-0460">Magnesium</keyword>
<keyword id="KW-0472">Membrane</keyword>
<keyword id="KW-0479">Metal-binding</keyword>
<keyword id="KW-0496">Mitochondrion</keyword>
<keyword id="KW-1000">Mitochondrion outer membrane</keyword>
<keyword id="KW-0547">Nucleotide-binding</keyword>
<keyword id="KW-0597">Phosphoprotein</keyword>
<keyword id="KW-0636">Prenylation</keyword>
<keyword id="KW-1185">Reference proteome</keyword>
<accession>Q9CZE3</accession>
<accession>Q3TXU7</accession>
<accession>Q8BVD3</accession>
<accession>Q91YN4</accession>
<comment type="function">
    <text evidence="3 7">The small GTPases Rab are key regulators of intracellular membrane trafficking, from the formation of transport vesicles to their fusion with membranes. Rabs cycle between an inactive GDP-bound form and an active GTP-bound form that is able to recruit to membranes different set of downstream effectors directly responsible for vesicle formation, movement, tethering and fusion. Also acts as an A-kinase anchoring protein by binding to the type II regulatory subunit of protein kinase A and anchoring it to the mitochondrion. Also involved in synchronization of mitochondrial fission. Plays a role in the maturation of phagosomes that engulf pathogens, such as S.aureus and M.tuberculosis. Plays an important role in the control of melanin production and melanosome biogenesis (By similarity). In concert with RAB38, regulates the proper trafficking of melanogenic enzymes TYR, TYRP1 and DCT/TYRP2 to melanosomes in melanocytes (PubMed:26620560). Stimulates phosphorylation of RAB10 'Thr-73' by LRRK2 (By similarity).</text>
</comment>
<comment type="catalytic activity">
    <reaction evidence="3">
        <text>GTP + H2O = GDP + phosphate + H(+)</text>
        <dbReference type="Rhea" id="RHEA:19669"/>
        <dbReference type="ChEBI" id="CHEBI:15377"/>
        <dbReference type="ChEBI" id="CHEBI:15378"/>
        <dbReference type="ChEBI" id="CHEBI:37565"/>
        <dbReference type="ChEBI" id="CHEBI:43474"/>
        <dbReference type="ChEBI" id="CHEBI:58189"/>
        <dbReference type="EC" id="3.6.5.2"/>
    </reaction>
    <physiologicalReaction direction="left-to-right" evidence="3">
        <dbReference type="Rhea" id="RHEA:19670"/>
    </physiologicalReaction>
</comment>
<comment type="cofactor">
    <cofactor evidence="3">
        <name>Mg(2+)</name>
        <dbReference type="ChEBI" id="CHEBI:18420"/>
    </cofactor>
</comment>
<comment type="activity regulation">
    <text evidence="3 7 8">Regulated by guanine the nucleotide exchange factor (GEF) BLOC-3 complex composed of HPS1 and HPS4 which promote the exchange of bound GDP for free GTP (By similarity). Regulated by the GTPase activating protein (GAP) SGSM2/RUTBC1 which increases the GTP hydrolysis activity (PubMed:26620560). Inhibited by GDP dissociation inhibitors (GDIs) which prevent Rab-GDP dissociation (Probable).</text>
</comment>
<comment type="subunit">
    <text evidence="3 5 6">Interacts with ANKRD27 (PubMed:19403694, PubMed:21187289). A decreased interaction with ANKRD27 seen in the presence of SGSM2 (By similarity). Interacts with LRRK2 (via N-terminus); this interaction results in stimulation of RAB10 phosphorylation by LRRK2 (By similarity).</text>
</comment>
<comment type="subcellular location">
    <subcellularLocation>
        <location evidence="3">Mitochondrion</location>
    </subcellularLocation>
    <subcellularLocation>
        <location evidence="8">Mitochondrion outer membrane</location>
        <topology evidence="8">Lipid-anchor</topology>
    </subcellularLocation>
    <subcellularLocation>
        <location evidence="3">Cytoplasmic vesicle</location>
        <location evidence="3">Phagosome</location>
    </subcellularLocation>
    <subcellularLocation>
        <location evidence="8">Cytoplasmic vesicle</location>
        <location evidence="8">Phagosome membrane</location>
        <topology evidence="8">Lipid-anchor</topology>
        <orientation evidence="8">Cytoplasmic side</orientation>
    </subcellularLocation>
    <subcellularLocation>
        <location evidence="7">Melanosome</location>
    </subcellularLocation>
    <subcellularLocation>
        <location evidence="3">Melanosome membrane</location>
    </subcellularLocation>
    <text evidence="3">Recruited to phagosomes containing S.aureus or M.tuberculosis. The BLOC-3 complex, a heterodimer of HPS1 and HPS4 promotes its membrane localization.</text>
</comment>
<comment type="tissue specificity">
    <text evidence="4">Widely expressed with highest levels in liver. Strong expression also found in melanocyte, platelet, mast cell and fibroblast cell lines.</text>
</comment>
<comment type="developmental stage">
    <text evidence="4">In the embryo, highest levels occur at day 7.</text>
</comment>
<comment type="domain">
    <text evidence="3">Switch 1, switch 2 and the interswitch regions are characteristic of Rab GTPases and mediate the interactions with Rab downstream effectors. The switch regions undergo conformational changes upon nucleotide binding which drive interaction with specific sets of effector proteins, with most effectors only binding to GTP-bound Rab.</text>
</comment>
<comment type="similarity">
    <text evidence="8">Belongs to the small GTPase superfamily. Rab family.</text>
</comment>
<name>RAB32_MOUSE</name>
<proteinExistence type="evidence at protein level"/>
<dbReference type="EC" id="3.6.5.2" evidence="3"/>
<dbReference type="EMBL" id="AY135650">
    <property type="protein sequence ID" value="AAN11298.1"/>
    <property type="molecule type" value="mRNA"/>
</dbReference>
<dbReference type="EMBL" id="AK012701">
    <property type="protein sequence ID" value="BAB28421.1"/>
    <property type="molecule type" value="mRNA"/>
</dbReference>
<dbReference type="EMBL" id="AK078874">
    <property type="protein sequence ID" value="BAC37434.1"/>
    <property type="molecule type" value="mRNA"/>
</dbReference>
<dbReference type="EMBL" id="AK088661">
    <property type="protein sequence ID" value="BAC40486.1"/>
    <property type="molecule type" value="mRNA"/>
</dbReference>
<dbReference type="EMBL" id="AK151543">
    <property type="protein sequence ID" value="BAE30489.1"/>
    <property type="molecule type" value="mRNA"/>
</dbReference>
<dbReference type="EMBL" id="AK159102">
    <property type="protein sequence ID" value="BAE34818.1"/>
    <property type="molecule type" value="mRNA"/>
</dbReference>
<dbReference type="EMBL" id="AK163620">
    <property type="protein sequence ID" value="BAE37425.1"/>
    <property type="molecule type" value="mRNA"/>
</dbReference>
<dbReference type="EMBL" id="BC016409">
    <property type="protein sequence ID" value="AAH16409.1"/>
    <property type="molecule type" value="mRNA"/>
</dbReference>
<dbReference type="EMBL" id="BC055945">
    <property type="protein sequence ID" value="AAH55945.1"/>
    <property type="molecule type" value="mRNA"/>
</dbReference>
<dbReference type="CCDS" id="CCDS23695.1"/>
<dbReference type="RefSeq" id="NP_080681.1">
    <property type="nucleotide sequence ID" value="NM_026405.3"/>
</dbReference>
<dbReference type="SMR" id="Q9CZE3"/>
<dbReference type="BioGRID" id="212474">
    <property type="interactions" value="2"/>
</dbReference>
<dbReference type="FunCoup" id="Q9CZE3">
    <property type="interactions" value="690"/>
</dbReference>
<dbReference type="IntAct" id="Q9CZE3">
    <property type="interactions" value="62"/>
</dbReference>
<dbReference type="STRING" id="10090.ENSMUSP00000019974"/>
<dbReference type="iPTMnet" id="Q9CZE3"/>
<dbReference type="PhosphoSitePlus" id="Q9CZE3"/>
<dbReference type="jPOST" id="Q9CZE3"/>
<dbReference type="PaxDb" id="10090-ENSMUSP00000019974"/>
<dbReference type="ProteomicsDB" id="300378"/>
<dbReference type="Pumba" id="Q9CZE3"/>
<dbReference type="ABCD" id="Q9CZE3">
    <property type="antibodies" value="22 sequenced antibodies"/>
</dbReference>
<dbReference type="DNASU" id="67844"/>
<dbReference type="Ensembl" id="ENSMUST00000019974.5">
    <property type="protein sequence ID" value="ENSMUSP00000019974.4"/>
    <property type="gene ID" value="ENSMUSG00000019832.6"/>
</dbReference>
<dbReference type="GeneID" id="67844"/>
<dbReference type="KEGG" id="mmu:67844"/>
<dbReference type="UCSC" id="uc007ejg.1">
    <property type="organism name" value="mouse"/>
</dbReference>
<dbReference type="AGR" id="MGI:1915094"/>
<dbReference type="CTD" id="10981"/>
<dbReference type="MGI" id="MGI:1915094">
    <property type="gene designation" value="Rab32"/>
</dbReference>
<dbReference type="VEuPathDB" id="HostDB:ENSMUSG00000019832"/>
<dbReference type="eggNOG" id="KOG4423">
    <property type="taxonomic scope" value="Eukaryota"/>
</dbReference>
<dbReference type="GeneTree" id="ENSGT00940000163553"/>
<dbReference type="HOGENOM" id="CLU_041217_10_6_1"/>
<dbReference type="InParanoid" id="Q9CZE3"/>
<dbReference type="OMA" id="FCKEGGF"/>
<dbReference type="OrthoDB" id="245989at2759"/>
<dbReference type="PhylomeDB" id="Q9CZE3"/>
<dbReference type="TreeFam" id="TF324491"/>
<dbReference type="Reactome" id="R-MMU-8873719">
    <property type="pathway name" value="RAB geranylgeranylation"/>
</dbReference>
<dbReference type="Reactome" id="R-MMU-8876198">
    <property type="pathway name" value="RAB GEFs exchange GTP for GDP on RABs"/>
</dbReference>
<dbReference type="BioGRID-ORCS" id="67844">
    <property type="hits" value="3 hits in 78 CRISPR screens"/>
</dbReference>
<dbReference type="ChiTaRS" id="Rab32">
    <property type="organism name" value="mouse"/>
</dbReference>
<dbReference type="PRO" id="PR:Q9CZE3"/>
<dbReference type="Proteomes" id="UP000000589">
    <property type="component" value="Chromosome 10"/>
</dbReference>
<dbReference type="RNAct" id="Q9CZE3">
    <property type="molecule type" value="protein"/>
</dbReference>
<dbReference type="Bgee" id="ENSMUSG00000019832">
    <property type="expression patterns" value="Expressed in granulocyte and 167 other cell types or tissues"/>
</dbReference>
<dbReference type="ExpressionAtlas" id="Q9CZE3">
    <property type="expression patterns" value="baseline and differential"/>
</dbReference>
<dbReference type="GO" id="GO:0042470">
    <property type="term" value="C:melanosome"/>
    <property type="evidence" value="ECO:0000314"/>
    <property type="project" value="UniProtKB"/>
</dbReference>
<dbReference type="GO" id="GO:0033162">
    <property type="term" value="C:melanosome membrane"/>
    <property type="evidence" value="ECO:0000250"/>
    <property type="project" value="UniProtKB"/>
</dbReference>
<dbReference type="GO" id="GO:0005741">
    <property type="term" value="C:mitochondrial outer membrane"/>
    <property type="evidence" value="ECO:0000250"/>
    <property type="project" value="UniProtKB"/>
</dbReference>
<dbReference type="GO" id="GO:0005739">
    <property type="term" value="C:mitochondrion"/>
    <property type="evidence" value="ECO:0007005"/>
    <property type="project" value="MGI"/>
</dbReference>
<dbReference type="GO" id="GO:0045335">
    <property type="term" value="C:phagocytic vesicle"/>
    <property type="evidence" value="ECO:0000250"/>
    <property type="project" value="UniProtKB"/>
</dbReference>
<dbReference type="GO" id="GO:0030670">
    <property type="term" value="C:phagocytic vesicle membrane"/>
    <property type="evidence" value="ECO:0007669"/>
    <property type="project" value="UniProtKB-SubCell"/>
</dbReference>
<dbReference type="GO" id="GO:0005802">
    <property type="term" value="C:trans-Golgi network"/>
    <property type="evidence" value="ECO:0007669"/>
    <property type="project" value="InterPro"/>
</dbReference>
<dbReference type="GO" id="GO:0005525">
    <property type="term" value="F:GTP binding"/>
    <property type="evidence" value="ECO:0007669"/>
    <property type="project" value="UniProtKB-KW"/>
</dbReference>
<dbReference type="GO" id="GO:0003924">
    <property type="term" value="F:GTPase activity"/>
    <property type="evidence" value="ECO:0000250"/>
    <property type="project" value="UniProtKB"/>
</dbReference>
<dbReference type="GO" id="GO:1903232">
    <property type="term" value="P:melanosome assembly"/>
    <property type="evidence" value="ECO:0000250"/>
    <property type="project" value="UniProtKB"/>
</dbReference>
<dbReference type="GO" id="GO:0090382">
    <property type="term" value="P:phagosome maturation"/>
    <property type="evidence" value="ECO:0000250"/>
    <property type="project" value="UniProtKB"/>
</dbReference>
<dbReference type="GO" id="GO:0016192">
    <property type="term" value="P:vesicle-mediated transport"/>
    <property type="evidence" value="ECO:0007669"/>
    <property type="project" value="InterPro"/>
</dbReference>
<dbReference type="CDD" id="cd04107">
    <property type="entry name" value="Rab32_Rab38"/>
    <property type="match status" value="1"/>
</dbReference>
<dbReference type="FunFam" id="3.40.50.300:FF:000222">
    <property type="entry name" value="RAB32, member RAS oncogene family"/>
    <property type="match status" value="1"/>
</dbReference>
<dbReference type="Gene3D" id="3.40.50.300">
    <property type="entry name" value="P-loop containing nucleotide triphosphate hydrolases"/>
    <property type="match status" value="1"/>
</dbReference>
<dbReference type="InterPro" id="IPR027417">
    <property type="entry name" value="P-loop_NTPase"/>
</dbReference>
<dbReference type="InterPro" id="IPR030697">
    <property type="entry name" value="Rab29/Rab38/Rab32"/>
</dbReference>
<dbReference type="InterPro" id="IPR005225">
    <property type="entry name" value="Small_GTP-bd"/>
</dbReference>
<dbReference type="InterPro" id="IPR001806">
    <property type="entry name" value="Small_GTPase"/>
</dbReference>
<dbReference type="NCBIfam" id="TIGR00231">
    <property type="entry name" value="small_GTP"/>
    <property type="match status" value="1"/>
</dbReference>
<dbReference type="PANTHER" id="PTHR47981">
    <property type="entry name" value="RAB FAMILY"/>
    <property type="match status" value="1"/>
</dbReference>
<dbReference type="PANTHER" id="PTHR47981:SF41">
    <property type="entry name" value="RAS-RELATED PROTEIN RAB-32 ISOFORM X1"/>
    <property type="match status" value="1"/>
</dbReference>
<dbReference type="Pfam" id="PF00071">
    <property type="entry name" value="Ras"/>
    <property type="match status" value="1"/>
</dbReference>
<dbReference type="PRINTS" id="PR00449">
    <property type="entry name" value="RASTRNSFRMNG"/>
</dbReference>
<dbReference type="SMART" id="SM00175">
    <property type="entry name" value="RAB"/>
    <property type="match status" value="1"/>
</dbReference>
<dbReference type="SMART" id="SM00176">
    <property type="entry name" value="RAN"/>
    <property type="match status" value="1"/>
</dbReference>
<dbReference type="SMART" id="SM00173">
    <property type="entry name" value="RAS"/>
    <property type="match status" value="1"/>
</dbReference>
<dbReference type="SMART" id="SM00174">
    <property type="entry name" value="RHO"/>
    <property type="match status" value="1"/>
</dbReference>
<dbReference type="SUPFAM" id="SSF52540">
    <property type="entry name" value="P-loop containing nucleoside triphosphate hydrolases"/>
    <property type="match status" value="1"/>
</dbReference>
<dbReference type="PROSITE" id="PS51419">
    <property type="entry name" value="RAB"/>
    <property type="match status" value="1"/>
</dbReference>
<reference evidence="8" key="1">
    <citation type="journal article" date="2003" name="Biochim. Biophys. Acta">
        <title>Identification and characterization of mouse Rab32 by mRNA and protein expression analysis.</title>
        <authorList>
            <person name="Cohen-Solal K.A."/>
            <person name="Sood R."/>
            <person name="Marin Y."/>
            <person name="Crespo-Carbone S.M."/>
            <person name="Sinsimer D."/>
            <person name="Martino J.J."/>
            <person name="Robbins C."/>
            <person name="Makalowska I."/>
            <person name="Trent J."/>
            <person name="Chen S."/>
        </authorList>
    </citation>
    <scope>NUCLEOTIDE SEQUENCE [MRNA]</scope>
    <scope>TISSUE SPECIFICITY</scope>
    <scope>DEVELOPMENTAL STAGE</scope>
</reference>
<reference key="2">
    <citation type="journal article" date="2005" name="Science">
        <title>The transcriptional landscape of the mammalian genome.</title>
        <authorList>
            <person name="Carninci P."/>
            <person name="Kasukawa T."/>
            <person name="Katayama S."/>
            <person name="Gough J."/>
            <person name="Frith M.C."/>
            <person name="Maeda N."/>
            <person name="Oyama R."/>
            <person name="Ravasi T."/>
            <person name="Lenhard B."/>
            <person name="Wells C."/>
            <person name="Kodzius R."/>
            <person name="Shimokawa K."/>
            <person name="Bajic V.B."/>
            <person name="Brenner S.E."/>
            <person name="Batalov S."/>
            <person name="Forrest A.R."/>
            <person name="Zavolan M."/>
            <person name="Davis M.J."/>
            <person name="Wilming L.G."/>
            <person name="Aidinis V."/>
            <person name="Allen J.E."/>
            <person name="Ambesi-Impiombato A."/>
            <person name="Apweiler R."/>
            <person name="Aturaliya R.N."/>
            <person name="Bailey T.L."/>
            <person name="Bansal M."/>
            <person name="Baxter L."/>
            <person name="Beisel K.W."/>
            <person name="Bersano T."/>
            <person name="Bono H."/>
            <person name="Chalk A.M."/>
            <person name="Chiu K.P."/>
            <person name="Choudhary V."/>
            <person name="Christoffels A."/>
            <person name="Clutterbuck D.R."/>
            <person name="Crowe M.L."/>
            <person name="Dalla E."/>
            <person name="Dalrymple B.P."/>
            <person name="de Bono B."/>
            <person name="Della Gatta G."/>
            <person name="di Bernardo D."/>
            <person name="Down T."/>
            <person name="Engstrom P."/>
            <person name="Fagiolini M."/>
            <person name="Faulkner G."/>
            <person name="Fletcher C.F."/>
            <person name="Fukushima T."/>
            <person name="Furuno M."/>
            <person name="Futaki S."/>
            <person name="Gariboldi M."/>
            <person name="Georgii-Hemming P."/>
            <person name="Gingeras T.R."/>
            <person name="Gojobori T."/>
            <person name="Green R.E."/>
            <person name="Gustincich S."/>
            <person name="Harbers M."/>
            <person name="Hayashi Y."/>
            <person name="Hensch T.K."/>
            <person name="Hirokawa N."/>
            <person name="Hill D."/>
            <person name="Huminiecki L."/>
            <person name="Iacono M."/>
            <person name="Ikeo K."/>
            <person name="Iwama A."/>
            <person name="Ishikawa T."/>
            <person name="Jakt M."/>
            <person name="Kanapin A."/>
            <person name="Katoh M."/>
            <person name="Kawasawa Y."/>
            <person name="Kelso J."/>
            <person name="Kitamura H."/>
            <person name="Kitano H."/>
            <person name="Kollias G."/>
            <person name="Krishnan S.P."/>
            <person name="Kruger A."/>
            <person name="Kummerfeld S.K."/>
            <person name="Kurochkin I.V."/>
            <person name="Lareau L.F."/>
            <person name="Lazarevic D."/>
            <person name="Lipovich L."/>
            <person name="Liu J."/>
            <person name="Liuni S."/>
            <person name="McWilliam S."/>
            <person name="Madan Babu M."/>
            <person name="Madera M."/>
            <person name="Marchionni L."/>
            <person name="Matsuda H."/>
            <person name="Matsuzawa S."/>
            <person name="Miki H."/>
            <person name="Mignone F."/>
            <person name="Miyake S."/>
            <person name="Morris K."/>
            <person name="Mottagui-Tabar S."/>
            <person name="Mulder N."/>
            <person name="Nakano N."/>
            <person name="Nakauchi H."/>
            <person name="Ng P."/>
            <person name="Nilsson R."/>
            <person name="Nishiguchi S."/>
            <person name="Nishikawa S."/>
            <person name="Nori F."/>
            <person name="Ohara O."/>
            <person name="Okazaki Y."/>
            <person name="Orlando V."/>
            <person name="Pang K.C."/>
            <person name="Pavan W.J."/>
            <person name="Pavesi G."/>
            <person name="Pesole G."/>
            <person name="Petrovsky N."/>
            <person name="Piazza S."/>
            <person name="Reed J."/>
            <person name="Reid J.F."/>
            <person name="Ring B.Z."/>
            <person name="Ringwald M."/>
            <person name="Rost B."/>
            <person name="Ruan Y."/>
            <person name="Salzberg S.L."/>
            <person name="Sandelin A."/>
            <person name="Schneider C."/>
            <person name="Schoenbach C."/>
            <person name="Sekiguchi K."/>
            <person name="Semple C.A."/>
            <person name="Seno S."/>
            <person name="Sessa L."/>
            <person name="Sheng Y."/>
            <person name="Shibata Y."/>
            <person name="Shimada H."/>
            <person name="Shimada K."/>
            <person name="Silva D."/>
            <person name="Sinclair B."/>
            <person name="Sperling S."/>
            <person name="Stupka E."/>
            <person name="Sugiura K."/>
            <person name="Sultana R."/>
            <person name="Takenaka Y."/>
            <person name="Taki K."/>
            <person name="Tammoja K."/>
            <person name="Tan S.L."/>
            <person name="Tang S."/>
            <person name="Taylor M.S."/>
            <person name="Tegner J."/>
            <person name="Teichmann S.A."/>
            <person name="Ueda H.R."/>
            <person name="van Nimwegen E."/>
            <person name="Verardo R."/>
            <person name="Wei C.L."/>
            <person name="Yagi K."/>
            <person name="Yamanishi H."/>
            <person name="Zabarovsky E."/>
            <person name="Zhu S."/>
            <person name="Zimmer A."/>
            <person name="Hide W."/>
            <person name="Bult C."/>
            <person name="Grimmond S.M."/>
            <person name="Teasdale R.D."/>
            <person name="Liu E.T."/>
            <person name="Brusic V."/>
            <person name="Quackenbush J."/>
            <person name="Wahlestedt C."/>
            <person name="Mattick J.S."/>
            <person name="Hume D.A."/>
            <person name="Kai C."/>
            <person name="Sasaki D."/>
            <person name="Tomaru Y."/>
            <person name="Fukuda S."/>
            <person name="Kanamori-Katayama M."/>
            <person name="Suzuki M."/>
            <person name="Aoki J."/>
            <person name="Arakawa T."/>
            <person name="Iida J."/>
            <person name="Imamura K."/>
            <person name="Itoh M."/>
            <person name="Kato T."/>
            <person name="Kawaji H."/>
            <person name="Kawagashira N."/>
            <person name="Kawashima T."/>
            <person name="Kojima M."/>
            <person name="Kondo S."/>
            <person name="Konno H."/>
            <person name="Nakano K."/>
            <person name="Ninomiya N."/>
            <person name="Nishio T."/>
            <person name="Okada M."/>
            <person name="Plessy C."/>
            <person name="Shibata K."/>
            <person name="Shiraki T."/>
            <person name="Suzuki S."/>
            <person name="Tagami M."/>
            <person name="Waki K."/>
            <person name="Watahiki A."/>
            <person name="Okamura-Oho Y."/>
            <person name="Suzuki H."/>
            <person name="Kawai J."/>
            <person name="Hayashizaki Y."/>
        </authorList>
    </citation>
    <scope>NUCLEOTIDE SEQUENCE [LARGE SCALE MRNA]</scope>
    <source>
        <strain>C57BL/6J</strain>
        <strain>NOD</strain>
        <tissue>Adipose tissue</tissue>
        <tissue>Bone marrow</tissue>
        <tissue>Colon</tissue>
        <tissue>Embryo</tissue>
        <tissue>Thymus</tissue>
    </source>
</reference>
<reference evidence="8" key="3">
    <citation type="journal article" date="2004" name="Genome Res.">
        <title>The status, quality, and expansion of the NIH full-length cDNA project: the Mammalian Gene Collection (MGC).</title>
        <authorList>
            <consortium name="The MGC Project Team"/>
        </authorList>
    </citation>
    <scope>NUCLEOTIDE SEQUENCE [LARGE SCALE MRNA]</scope>
    <source>
        <strain evidence="10">FVB/N</strain>
        <tissue evidence="10">Liver</tissue>
        <tissue evidence="9">Mammary gland</tissue>
    </source>
</reference>
<reference key="4">
    <citation type="journal article" date="2009" name="Mol. Biol. Cell">
        <title>Varp is a novel Rab32/38-binding protein that regulates Tyrp1 trafficking in melanocytes.</title>
        <authorList>
            <person name="Tamura K."/>
            <person name="Ohbayashi N."/>
            <person name="Maruta Y."/>
            <person name="Kanno E."/>
            <person name="Itoh T."/>
            <person name="Fukuda M."/>
        </authorList>
    </citation>
    <scope>INTERACTION WITH ANKRD27</scope>
</reference>
<reference key="5">
    <citation type="journal article" date="2010" name="Cell">
        <title>A tissue-specific atlas of mouse protein phosphorylation and expression.</title>
        <authorList>
            <person name="Huttlin E.L."/>
            <person name="Jedrychowski M.P."/>
            <person name="Elias J.E."/>
            <person name="Goswami T."/>
            <person name="Rad R."/>
            <person name="Beausoleil S.A."/>
            <person name="Villen J."/>
            <person name="Haas W."/>
            <person name="Sowa M.E."/>
            <person name="Gygi S.P."/>
        </authorList>
    </citation>
    <scope>IDENTIFICATION BY MASS SPECTROMETRY [LARGE SCALE ANALYSIS]</scope>
    <source>
        <tissue>Kidney</tissue>
        <tissue>Liver</tissue>
        <tissue>Lung</tissue>
        <tissue>Spleen</tissue>
    </source>
</reference>
<reference key="6">
    <citation type="journal article" date="2011" name="J. Biol. Chem.">
        <title>Structure-function analysis of VPS9-ankyrin-repeat protein (Varp) in the trafficking of tyrosinase-related protein 1 in melanocytes.</title>
        <authorList>
            <person name="Tamura K."/>
            <person name="Ohbayashi N."/>
            <person name="Ishibashi K."/>
            <person name="Fukuda M."/>
        </authorList>
    </citation>
    <scope>INTERACTION WITH ANKRD27</scope>
    <scope>MUTAGENESIS OF VAL-92</scope>
</reference>
<reference key="7">
    <citation type="journal article" date="2016" name="J. Biol. Chem.">
        <title>RUTBC1 functions as a GTPase-activating protein for Rab32/38 and regulates melanogenic enzyme trafficking in melanocytes.</title>
        <authorList>
            <person name="Marubashi S."/>
            <person name="Shimada H."/>
            <person name="Fukuda M."/>
            <person name="Ohbayashi N."/>
        </authorList>
    </citation>
    <scope>FUNCTION</scope>
    <scope>ACTIVITY REGULATION</scope>
    <scope>SUBCELLULAR LOCATION</scope>
    <scope>MUTAGENESIS OF GLN-83</scope>
</reference>
<protein>
    <recommendedName>
        <fullName>Ras-related protein Rab-32</fullName>
        <ecNumber evidence="3">3.6.5.2</ecNumber>
    </recommendedName>
</protein>
<feature type="initiator methionine" description="Removed" evidence="3">
    <location>
        <position position="1"/>
    </location>
</feature>
<feature type="chain" id="PRO_0000121236" description="Ras-related protein Rab-32">
    <location>
        <begin position="2"/>
        <end position="223"/>
    </location>
</feature>
<feature type="region of interest" description="PKA-RII subunit binding domain" evidence="1">
    <location>
        <begin position="176"/>
        <end position="195"/>
    </location>
</feature>
<feature type="short sequence motif" description="Switch 1" evidence="3">
    <location>
        <begin position="46"/>
        <end position="60"/>
    </location>
</feature>
<feature type="short sequence motif" description="Switch 2" evidence="3">
    <location>
        <begin position="82"/>
        <end position="95"/>
    </location>
</feature>
<feature type="binding site" evidence="3">
    <location>
        <position position="34"/>
    </location>
    <ligand>
        <name>GTP</name>
        <dbReference type="ChEBI" id="CHEBI:37565"/>
    </ligand>
</feature>
<feature type="binding site" evidence="3">
    <location>
        <position position="35"/>
    </location>
    <ligand>
        <name>GTP</name>
        <dbReference type="ChEBI" id="CHEBI:37565"/>
    </ligand>
</feature>
<feature type="binding site" evidence="3">
    <location>
        <position position="36"/>
    </location>
    <ligand>
        <name>GTP</name>
        <dbReference type="ChEBI" id="CHEBI:37565"/>
    </ligand>
</feature>
<feature type="binding site" evidence="3">
    <location>
        <position position="37"/>
    </location>
    <ligand>
        <name>GTP</name>
        <dbReference type="ChEBI" id="CHEBI:37565"/>
    </ligand>
</feature>
<feature type="binding site" evidence="3">
    <location>
        <position position="37"/>
    </location>
    <ligand>
        <name>Mg(2+)</name>
        <dbReference type="ChEBI" id="CHEBI:18420"/>
    </ligand>
</feature>
<feature type="binding site" evidence="3">
    <location>
        <position position="38"/>
    </location>
    <ligand>
        <name>GTP</name>
        <dbReference type="ChEBI" id="CHEBI:37565"/>
    </ligand>
</feature>
<feature type="binding site" evidence="3">
    <location>
        <position position="49"/>
    </location>
    <ligand>
        <name>GTP</name>
        <dbReference type="ChEBI" id="CHEBI:37565"/>
    </ligand>
</feature>
<feature type="binding site" evidence="3">
    <location>
        <position position="50"/>
    </location>
    <ligand>
        <name>GTP</name>
        <dbReference type="ChEBI" id="CHEBI:37565"/>
    </ligand>
</feature>
<feature type="binding site" evidence="3">
    <location>
        <position position="52"/>
    </location>
    <ligand>
        <name>GTP</name>
        <dbReference type="ChEBI" id="CHEBI:37565"/>
    </ligand>
</feature>
<feature type="binding site" evidence="3">
    <location>
        <position position="55"/>
    </location>
    <ligand>
        <name>GTP</name>
        <dbReference type="ChEBI" id="CHEBI:37565"/>
    </ligand>
</feature>
<feature type="binding site" evidence="3">
    <location>
        <position position="55"/>
    </location>
    <ligand>
        <name>Mg(2+)</name>
        <dbReference type="ChEBI" id="CHEBI:18420"/>
    </ligand>
</feature>
<feature type="binding site" evidence="3">
    <location>
        <position position="79"/>
    </location>
    <ligand>
        <name>Mg(2+)</name>
        <dbReference type="ChEBI" id="CHEBI:18420"/>
    </ligand>
</feature>
<feature type="binding site" evidence="3">
    <location>
        <position position="82"/>
    </location>
    <ligand>
        <name>GTP</name>
        <dbReference type="ChEBI" id="CHEBI:37565"/>
    </ligand>
</feature>
<feature type="binding site" evidence="3">
    <location>
        <position position="141"/>
    </location>
    <ligand>
        <name>GTP</name>
        <dbReference type="ChEBI" id="CHEBI:37565"/>
    </ligand>
</feature>
<feature type="binding site" evidence="3">
    <location>
        <position position="142"/>
    </location>
    <ligand>
        <name>GTP</name>
        <dbReference type="ChEBI" id="CHEBI:37565"/>
    </ligand>
</feature>
<feature type="binding site" evidence="3">
    <location>
        <position position="144"/>
    </location>
    <ligand>
        <name>GTP</name>
        <dbReference type="ChEBI" id="CHEBI:37565"/>
    </ligand>
</feature>
<feature type="binding site" evidence="3">
    <location>
        <position position="173"/>
    </location>
    <ligand>
        <name>GTP</name>
        <dbReference type="ChEBI" id="CHEBI:37565"/>
    </ligand>
</feature>
<feature type="binding site" evidence="3">
    <location>
        <position position="174"/>
    </location>
    <ligand>
        <name>GTP</name>
        <dbReference type="ChEBI" id="CHEBI:37565"/>
    </ligand>
</feature>
<feature type="modified residue" description="N-acetylalanine" evidence="3">
    <location>
        <position position="2"/>
    </location>
</feature>
<feature type="modified residue" description="Phosphoserine" evidence="3">
    <location>
        <position position="69"/>
    </location>
</feature>
<feature type="lipid moiety-binding region" description="S-geranylgeranyl cysteine" evidence="2">
    <location>
        <position position="222"/>
    </location>
</feature>
<feature type="lipid moiety-binding region" description="S-geranylgeranyl cysteine" evidence="2">
    <location>
        <position position="223"/>
    </location>
</feature>
<feature type="mutagenesis site" description="Inhibits the proper trafficking of melanogenic enzymes TYR, TYRP1 and DCT/TYRP2 to melanosomes in melanocytes." evidence="7">
    <original>Q</original>
    <variation>L</variation>
    <location>
        <position position="83"/>
    </location>
</feature>
<feature type="mutagenesis site" description="Disrupts interaction with ANKRD27." evidence="6">
    <original>V</original>
    <variation>A</variation>
    <location>
        <position position="92"/>
    </location>
</feature>
<feature type="sequence conflict" description="In Ref. 2; BAC37434." evidence="8" ref="2">
    <original>V</original>
    <variation>E</variation>
    <location>
        <position position="64"/>
    </location>
</feature>
<feature type="sequence conflict" description="In Ref. 3; AAH16409/AAH55945." evidence="8" ref="3">
    <original>T</original>
    <variation>S</variation>
    <location>
        <position position="166"/>
    </location>
</feature>